<sequence>MSFPYSLKPFNTFGVEQSCLSLIEVHSKAELQSACLSLYQSKRPMLVLGGGSNIVFTDDFNGTVVRVLSKGISCSEDDTHFYLAVEAGENWHELVQFSLNQNMPGLENLALIPGTVGAAPIQNIGAYGVELCDICDWVEYLDLASGNLLRLTVDECEFAYRESIFKGSLRDKAVITAVGLRLPKAWQPKLAYGPLQSFTAETVTPREIFDRVCEVRSEKLPNPEVLGNAGSFFKNPIVSAATYMQLAARFPSIVGYAQPNGEVKLAAGWLIEHAGLKGFALGNAGVHAKQALVLVNLGHATGQDICRLALHVITRVNEVFGVKLEAEPRIMGLTGETSLDV</sequence>
<proteinExistence type="inferred from homology"/>
<name>MURB_SHESA</name>
<feature type="chain" id="PRO_0000332502" description="UDP-N-acetylenolpyruvoylglucosamine reductase">
    <location>
        <begin position="1"/>
        <end position="341"/>
    </location>
</feature>
<feature type="domain" description="FAD-binding PCMH-type" evidence="1">
    <location>
        <begin position="15"/>
        <end position="185"/>
    </location>
</feature>
<feature type="active site" evidence="1">
    <location>
        <position position="161"/>
    </location>
</feature>
<feature type="active site" description="Proton donor" evidence="1">
    <location>
        <position position="231"/>
    </location>
</feature>
<feature type="active site" evidence="1">
    <location>
        <position position="327"/>
    </location>
</feature>
<organism>
    <name type="scientific">Shewanella sp. (strain ANA-3)</name>
    <dbReference type="NCBI Taxonomy" id="94122"/>
    <lineage>
        <taxon>Bacteria</taxon>
        <taxon>Pseudomonadati</taxon>
        <taxon>Pseudomonadota</taxon>
        <taxon>Gammaproteobacteria</taxon>
        <taxon>Alteromonadales</taxon>
        <taxon>Shewanellaceae</taxon>
        <taxon>Shewanella</taxon>
    </lineage>
</organism>
<reference key="1">
    <citation type="submission" date="2006-09" db="EMBL/GenBank/DDBJ databases">
        <title>Complete sequence of chromosome 1 of Shewanella sp. ANA-3.</title>
        <authorList>
            <person name="Copeland A."/>
            <person name="Lucas S."/>
            <person name="Lapidus A."/>
            <person name="Barry K."/>
            <person name="Detter J.C."/>
            <person name="Glavina del Rio T."/>
            <person name="Hammon N."/>
            <person name="Israni S."/>
            <person name="Dalin E."/>
            <person name="Tice H."/>
            <person name="Pitluck S."/>
            <person name="Chertkov O."/>
            <person name="Brettin T."/>
            <person name="Bruce D."/>
            <person name="Han C."/>
            <person name="Tapia R."/>
            <person name="Gilna P."/>
            <person name="Schmutz J."/>
            <person name="Larimer F."/>
            <person name="Land M."/>
            <person name="Hauser L."/>
            <person name="Kyrpides N."/>
            <person name="Kim E."/>
            <person name="Newman D."/>
            <person name="Salticov C."/>
            <person name="Konstantinidis K."/>
            <person name="Klappenback J."/>
            <person name="Tiedje J."/>
            <person name="Richardson P."/>
        </authorList>
    </citation>
    <scope>NUCLEOTIDE SEQUENCE [LARGE SCALE GENOMIC DNA]</scope>
    <source>
        <strain>ANA-3</strain>
    </source>
</reference>
<dbReference type="EC" id="1.3.1.98" evidence="1"/>
<dbReference type="EMBL" id="CP000469">
    <property type="protein sequence ID" value="ABK46426.1"/>
    <property type="status" value="ALT_INIT"/>
    <property type="molecule type" value="Genomic_DNA"/>
</dbReference>
<dbReference type="RefSeq" id="WP_041412897.1">
    <property type="nucleotide sequence ID" value="NC_008577.1"/>
</dbReference>
<dbReference type="SMR" id="A0KRK7"/>
<dbReference type="STRING" id="94122.Shewana3_0182"/>
<dbReference type="KEGG" id="shn:Shewana3_0182"/>
<dbReference type="eggNOG" id="COG0812">
    <property type="taxonomic scope" value="Bacteria"/>
</dbReference>
<dbReference type="HOGENOM" id="CLU_035304_0_0_6"/>
<dbReference type="OrthoDB" id="9804753at2"/>
<dbReference type="UniPathway" id="UPA00219"/>
<dbReference type="Proteomes" id="UP000002589">
    <property type="component" value="Chromosome"/>
</dbReference>
<dbReference type="GO" id="GO:0005829">
    <property type="term" value="C:cytosol"/>
    <property type="evidence" value="ECO:0007669"/>
    <property type="project" value="TreeGrafter"/>
</dbReference>
<dbReference type="GO" id="GO:0071949">
    <property type="term" value="F:FAD binding"/>
    <property type="evidence" value="ECO:0007669"/>
    <property type="project" value="InterPro"/>
</dbReference>
<dbReference type="GO" id="GO:0008762">
    <property type="term" value="F:UDP-N-acetylmuramate dehydrogenase activity"/>
    <property type="evidence" value="ECO:0007669"/>
    <property type="project" value="UniProtKB-UniRule"/>
</dbReference>
<dbReference type="GO" id="GO:0051301">
    <property type="term" value="P:cell division"/>
    <property type="evidence" value="ECO:0007669"/>
    <property type="project" value="UniProtKB-KW"/>
</dbReference>
<dbReference type="GO" id="GO:0071555">
    <property type="term" value="P:cell wall organization"/>
    <property type="evidence" value="ECO:0007669"/>
    <property type="project" value="UniProtKB-KW"/>
</dbReference>
<dbReference type="GO" id="GO:0009252">
    <property type="term" value="P:peptidoglycan biosynthetic process"/>
    <property type="evidence" value="ECO:0007669"/>
    <property type="project" value="UniProtKB-UniRule"/>
</dbReference>
<dbReference type="GO" id="GO:0008360">
    <property type="term" value="P:regulation of cell shape"/>
    <property type="evidence" value="ECO:0007669"/>
    <property type="project" value="UniProtKB-KW"/>
</dbReference>
<dbReference type="Gene3D" id="3.30.465.10">
    <property type="match status" value="1"/>
</dbReference>
<dbReference type="Gene3D" id="3.90.78.10">
    <property type="entry name" value="UDP-N-acetylenolpyruvoylglucosamine reductase, C-terminal domain"/>
    <property type="match status" value="1"/>
</dbReference>
<dbReference type="Gene3D" id="3.30.43.10">
    <property type="entry name" value="Uridine Diphospho-n-acetylenolpyruvylglucosamine Reductase, domain 2"/>
    <property type="match status" value="1"/>
</dbReference>
<dbReference type="HAMAP" id="MF_00037">
    <property type="entry name" value="MurB"/>
    <property type="match status" value="1"/>
</dbReference>
<dbReference type="InterPro" id="IPR016166">
    <property type="entry name" value="FAD-bd_PCMH"/>
</dbReference>
<dbReference type="InterPro" id="IPR036318">
    <property type="entry name" value="FAD-bd_PCMH-like_sf"/>
</dbReference>
<dbReference type="InterPro" id="IPR016167">
    <property type="entry name" value="FAD-bd_PCMH_sub1"/>
</dbReference>
<dbReference type="InterPro" id="IPR016169">
    <property type="entry name" value="FAD-bd_PCMH_sub2"/>
</dbReference>
<dbReference type="InterPro" id="IPR003170">
    <property type="entry name" value="MurB"/>
</dbReference>
<dbReference type="InterPro" id="IPR011601">
    <property type="entry name" value="MurB_C"/>
</dbReference>
<dbReference type="InterPro" id="IPR036635">
    <property type="entry name" value="MurB_C_sf"/>
</dbReference>
<dbReference type="InterPro" id="IPR006094">
    <property type="entry name" value="Oxid_FAD_bind_N"/>
</dbReference>
<dbReference type="NCBIfam" id="TIGR00179">
    <property type="entry name" value="murB"/>
    <property type="match status" value="1"/>
</dbReference>
<dbReference type="NCBIfam" id="NF000755">
    <property type="entry name" value="PRK00046.1"/>
    <property type="match status" value="1"/>
</dbReference>
<dbReference type="NCBIfam" id="NF010478">
    <property type="entry name" value="PRK13903.1"/>
    <property type="match status" value="1"/>
</dbReference>
<dbReference type="PANTHER" id="PTHR21071">
    <property type="entry name" value="UDP-N-ACETYLENOLPYRUVOYLGLUCOSAMINE REDUCTASE"/>
    <property type="match status" value="1"/>
</dbReference>
<dbReference type="PANTHER" id="PTHR21071:SF4">
    <property type="entry name" value="UDP-N-ACETYLENOLPYRUVOYLGLUCOSAMINE REDUCTASE"/>
    <property type="match status" value="1"/>
</dbReference>
<dbReference type="Pfam" id="PF01565">
    <property type="entry name" value="FAD_binding_4"/>
    <property type="match status" value="1"/>
</dbReference>
<dbReference type="Pfam" id="PF02873">
    <property type="entry name" value="MurB_C"/>
    <property type="match status" value="1"/>
</dbReference>
<dbReference type="SUPFAM" id="SSF56176">
    <property type="entry name" value="FAD-binding/transporter-associated domain-like"/>
    <property type="match status" value="1"/>
</dbReference>
<dbReference type="SUPFAM" id="SSF56194">
    <property type="entry name" value="Uridine diphospho-N-Acetylenolpyruvylglucosamine reductase, MurB, C-terminal domain"/>
    <property type="match status" value="1"/>
</dbReference>
<dbReference type="PROSITE" id="PS51387">
    <property type="entry name" value="FAD_PCMH"/>
    <property type="match status" value="1"/>
</dbReference>
<protein>
    <recommendedName>
        <fullName evidence="1">UDP-N-acetylenolpyruvoylglucosamine reductase</fullName>
        <ecNumber evidence="1">1.3.1.98</ecNumber>
    </recommendedName>
    <alternativeName>
        <fullName evidence="1">UDP-N-acetylmuramate dehydrogenase</fullName>
    </alternativeName>
</protein>
<accession>A0KRK7</accession>
<evidence type="ECO:0000255" key="1">
    <source>
        <dbReference type="HAMAP-Rule" id="MF_00037"/>
    </source>
</evidence>
<evidence type="ECO:0000305" key="2"/>
<gene>
    <name evidence="1" type="primary">murB</name>
    <name type="ordered locus">Shewana3_0182</name>
</gene>
<keyword id="KW-0131">Cell cycle</keyword>
<keyword id="KW-0132">Cell division</keyword>
<keyword id="KW-0133">Cell shape</keyword>
<keyword id="KW-0961">Cell wall biogenesis/degradation</keyword>
<keyword id="KW-0963">Cytoplasm</keyword>
<keyword id="KW-0274">FAD</keyword>
<keyword id="KW-0285">Flavoprotein</keyword>
<keyword id="KW-0521">NADP</keyword>
<keyword id="KW-0560">Oxidoreductase</keyword>
<keyword id="KW-0573">Peptidoglycan synthesis</keyword>
<comment type="function">
    <text evidence="1">Cell wall formation.</text>
</comment>
<comment type="catalytic activity">
    <reaction evidence="1">
        <text>UDP-N-acetyl-alpha-D-muramate + NADP(+) = UDP-N-acetyl-3-O-(1-carboxyvinyl)-alpha-D-glucosamine + NADPH + H(+)</text>
        <dbReference type="Rhea" id="RHEA:12248"/>
        <dbReference type="ChEBI" id="CHEBI:15378"/>
        <dbReference type="ChEBI" id="CHEBI:57783"/>
        <dbReference type="ChEBI" id="CHEBI:58349"/>
        <dbReference type="ChEBI" id="CHEBI:68483"/>
        <dbReference type="ChEBI" id="CHEBI:70757"/>
        <dbReference type="EC" id="1.3.1.98"/>
    </reaction>
</comment>
<comment type="cofactor">
    <cofactor evidence="1">
        <name>FAD</name>
        <dbReference type="ChEBI" id="CHEBI:57692"/>
    </cofactor>
</comment>
<comment type="pathway">
    <text evidence="1">Cell wall biogenesis; peptidoglycan biosynthesis.</text>
</comment>
<comment type="subcellular location">
    <subcellularLocation>
        <location evidence="1">Cytoplasm</location>
    </subcellularLocation>
</comment>
<comment type="similarity">
    <text evidence="1">Belongs to the MurB family.</text>
</comment>
<comment type="sequence caution" evidence="2">
    <conflict type="erroneous initiation">
        <sequence resource="EMBL-CDS" id="ABK46426"/>
    </conflict>
</comment>